<dbReference type="EC" id="1.11.1.7" evidence="13 14 17 18 19"/>
<dbReference type="EMBL" id="M58150">
    <property type="protein sequence ID" value="AAA62714.1"/>
    <property type="molecule type" value="mRNA"/>
</dbReference>
<dbReference type="PIR" id="A35828">
    <property type="entry name" value="A35828"/>
</dbReference>
<dbReference type="RefSeq" id="NP_776358.1">
    <property type="nucleotide sequence ID" value="NM_173933.2"/>
</dbReference>
<dbReference type="RefSeq" id="XP_010814001.1">
    <property type="nucleotide sequence ID" value="XM_010815699.4"/>
</dbReference>
<dbReference type="RefSeq" id="XP_010814003.1">
    <property type="nucleotide sequence ID" value="XM_010815701.4"/>
</dbReference>
<dbReference type="RefSeq" id="XP_015313999.1">
    <property type="nucleotide sequence ID" value="XM_015458513.3"/>
</dbReference>
<dbReference type="RefSeq" id="XP_024835324.1">
    <property type="nucleotide sequence ID" value="XM_024979556.2"/>
</dbReference>
<dbReference type="RefSeq" id="XP_059733681.1">
    <property type="nucleotide sequence ID" value="XM_059877698.1"/>
</dbReference>
<dbReference type="PDB" id="2IPS">
    <property type="method" value="X-ray"/>
    <property type="resolution" value="3.10 A"/>
    <property type="chains" value="A=118-712"/>
</dbReference>
<dbReference type="PDB" id="2NQX">
    <property type="method" value="X-ray"/>
    <property type="resolution" value="2.95 A"/>
    <property type="chains" value="A=118-712"/>
</dbReference>
<dbReference type="PDB" id="2PT3">
    <property type="method" value="X-ray"/>
    <property type="resolution" value="2.34 A"/>
    <property type="chains" value="A=118-712"/>
</dbReference>
<dbReference type="PDB" id="2PUM">
    <property type="method" value="X-ray"/>
    <property type="resolution" value="2.70 A"/>
    <property type="chains" value="A=118-712"/>
</dbReference>
<dbReference type="PDB" id="2QPK">
    <property type="method" value="X-ray"/>
    <property type="resolution" value="2.34 A"/>
    <property type="chains" value="A=118-712"/>
</dbReference>
<dbReference type="PDB" id="2QQT">
    <property type="method" value="X-ray"/>
    <property type="resolution" value="2.50 A"/>
    <property type="chains" value="A=118-712"/>
</dbReference>
<dbReference type="PDB" id="2QRB">
    <property type="method" value="X-ray"/>
    <property type="resolution" value="2.50 A"/>
    <property type="chains" value="A=118-712"/>
</dbReference>
<dbReference type="PDB" id="3BXI">
    <property type="method" value="X-ray"/>
    <property type="resolution" value="2.30 A"/>
    <property type="chains" value="A=118-712"/>
</dbReference>
<dbReference type="PDB" id="3ERI">
    <property type="method" value="X-ray"/>
    <property type="resolution" value="2.50 A"/>
    <property type="chains" value="A=118-712"/>
</dbReference>
<dbReference type="PDB" id="3GC1">
    <property type="method" value="X-ray"/>
    <property type="resolution" value="2.50 A"/>
    <property type="chains" value="A=118-712"/>
</dbReference>
<dbReference type="PDB" id="3GCJ">
    <property type="method" value="X-ray"/>
    <property type="resolution" value="2.34 A"/>
    <property type="chains" value="A=118-712"/>
</dbReference>
<dbReference type="PDB" id="3GCK">
    <property type="method" value="X-ray"/>
    <property type="resolution" value="2.90 A"/>
    <property type="chains" value="A=118-712"/>
</dbReference>
<dbReference type="PDB" id="3GCL">
    <property type="method" value="X-ray"/>
    <property type="resolution" value="2.50 A"/>
    <property type="chains" value="A=118-712"/>
</dbReference>
<dbReference type="PDB" id="3I6N">
    <property type="method" value="X-ray"/>
    <property type="resolution" value="2.70 A"/>
    <property type="chains" value="A=118-712"/>
</dbReference>
<dbReference type="PDB" id="3KRQ">
    <property type="method" value="X-ray"/>
    <property type="resolution" value="2.25 A"/>
    <property type="chains" value="A=118-712"/>
</dbReference>
<dbReference type="PDB" id="3PY4">
    <property type="method" value="X-ray"/>
    <property type="resolution" value="2.42 A"/>
    <property type="chains" value="A=118-712"/>
</dbReference>
<dbReference type="PDB" id="3R4X">
    <property type="method" value="X-ray"/>
    <property type="resolution" value="2.01 A"/>
    <property type="chains" value="A=118-712"/>
</dbReference>
<dbReference type="PDB" id="3R5O">
    <property type="method" value="X-ray"/>
    <property type="resolution" value="2.60 A"/>
    <property type="chains" value="A=118-712"/>
</dbReference>
<dbReference type="PDB" id="3TGY">
    <property type="method" value="X-ray"/>
    <property type="resolution" value="2.35 A"/>
    <property type="chains" value="A=118-712"/>
</dbReference>
<dbReference type="PDB" id="3UBA">
    <property type="method" value="X-ray"/>
    <property type="resolution" value="2.65 A"/>
    <property type="chains" value="A=118-712"/>
</dbReference>
<dbReference type="PDB" id="3V6Q">
    <property type="method" value="X-ray"/>
    <property type="resolution" value="2.00 A"/>
    <property type="chains" value="A=118-712"/>
</dbReference>
<dbReference type="PDB" id="4GM7">
    <property type="method" value="X-ray"/>
    <property type="resolution" value="2.60 A"/>
    <property type="chains" value="A=118-712"/>
</dbReference>
<dbReference type="PDB" id="4KSZ">
    <property type="method" value="X-ray"/>
    <property type="resolution" value="1.98 A"/>
    <property type="chains" value="A=118-712"/>
</dbReference>
<dbReference type="PDB" id="4NJB">
    <property type="method" value="X-ray"/>
    <property type="resolution" value="2.31 A"/>
    <property type="chains" value="A=118-712"/>
</dbReference>
<dbReference type="PDB" id="4PNX">
    <property type="method" value="X-ray"/>
    <property type="resolution" value="2.41 A"/>
    <property type="chains" value="A=118-712"/>
</dbReference>
<dbReference type="PDB" id="5B72">
    <property type="method" value="X-ray"/>
    <property type="resolution" value="1.98 A"/>
    <property type="chains" value="A=118-712"/>
</dbReference>
<dbReference type="PDB" id="5GH0">
    <property type="method" value="X-ray"/>
    <property type="resolution" value="2.30 A"/>
    <property type="chains" value="A=118-712"/>
</dbReference>
<dbReference type="PDB" id="5GLS">
    <property type="method" value="X-ray"/>
    <property type="resolution" value="1.93 A"/>
    <property type="chains" value="A=118-712"/>
</dbReference>
<dbReference type="PDB" id="5WV3">
    <property type="method" value="X-ray"/>
    <property type="resolution" value="2.07 A"/>
    <property type="chains" value="A=118-712"/>
</dbReference>
<dbReference type="PDB" id="5ZGS">
    <property type="method" value="X-ray"/>
    <property type="resolution" value="2.20 A"/>
    <property type="chains" value="A=118-712"/>
</dbReference>
<dbReference type="PDB" id="6A4Y">
    <property type="method" value="X-ray"/>
    <property type="resolution" value="1.92 A"/>
    <property type="chains" value="A=118-712"/>
</dbReference>
<dbReference type="PDB" id="6KMK">
    <property type="method" value="X-ray"/>
    <property type="resolution" value="2.30 A"/>
    <property type="chains" value="A=118-712"/>
</dbReference>
<dbReference type="PDB" id="6KY7">
    <property type="method" value="X-ray"/>
    <property type="resolution" value="2.27 A"/>
    <property type="chains" value="A=118-712"/>
</dbReference>
<dbReference type="PDB" id="6L2J">
    <property type="method" value="X-ray"/>
    <property type="resolution" value="1.93 A"/>
    <property type="chains" value="A=118-712"/>
</dbReference>
<dbReference type="PDB" id="6L5G">
    <property type="method" value="X-ray"/>
    <property type="resolution" value="2.50 A"/>
    <property type="chains" value="A=118-712"/>
</dbReference>
<dbReference type="PDB" id="6L9T">
    <property type="method" value="X-ray"/>
    <property type="resolution" value="1.89 A"/>
    <property type="chains" value="A=118-712"/>
</dbReference>
<dbReference type="PDB" id="6M7E">
    <property type="method" value="X-ray"/>
    <property type="resolution" value="2.42 A"/>
    <property type="chains" value="A=118-712"/>
</dbReference>
<dbReference type="PDB" id="7C75">
    <property type="method" value="X-ray"/>
    <property type="resolution" value="2.70 A"/>
    <property type="chains" value="A=118-712"/>
</dbReference>
<dbReference type="PDB" id="7D52">
    <property type="method" value="X-ray"/>
    <property type="resolution" value="2.20 A"/>
    <property type="chains" value="A=118-712"/>
</dbReference>
<dbReference type="PDB" id="7DLQ">
    <property type="method" value="X-ray"/>
    <property type="resolution" value="1.77 A"/>
    <property type="chains" value="A=118-712"/>
</dbReference>
<dbReference type="PDB" id="7DMR">
    <property type="method" value="X-ray"/>
    <property type="resolution" value="2.20 A"/>
    <property type="chains" value="A=118-712"/>
</dbReference>
<dbReference type="PDB" id="7DN6">
    <property type="method" value="X-ray"/>
    <property type="resolution" value="1.70 A"/>
    <property type="chains" value="A=118-712"/>
</dbReference>
<dbReference type="PDB" id="7DN7">
    <property type="method" value="X-ray"/>
    <property type="resolution" value="1.70 A"/>
    <property type="chains" value="A=118-712"/>
</dbReference>
<dbReference type="PDB" id="7WYJ">
    <property type="method" value="X-ray"/>
    <property type="resolution" value="1.89 A"/>
    <property type="chains" value="A=118-712"/>
</dbReference>
<dbReference type="PDB" id="8Y9X">
    <property type="method" value="X-ray"/>
    <property type="resolution" value="2.00 A"/>
    <property type="chains" value="A=118-712"/>
</dbReference>
<dbReference type="PDB" id="9IT8">
    <property type="method" value="X-ray"/>
    <property type="resolution" value="1.95 A"/>
    <property type="chains" value="A=118-712"/>
</dbReference>
<dbReference type="PDB" id="9KU6">
    <property type="method" value="X-ray"/>
    <property type="resolution" value="1.72 A"/>
    <property type="chains" value="A=118-712"/>
</dbReference>
<dbReference type="PDB" id="9M0I">
    <property type="method" value="X-ray"/>
    <property type="resolution" value="2.00 A"/>
    <property type="chains" value="A=118-712"/>
</dbReference>
<dbReference type="PDBsum" id="2IPS"/>
<dbReference type="PDBsum" id="2NQX"/>
<dbReference type="PDBsum" id="2PT3"/>
<dbReference type="PDBsum" id="2PUM"/>
<dbReference type="PDBsum" id="2QPK"/>
<dbReference type="PDBsum" id="2QQT"/>
<dbReference type="PDBsum" id="2QRB"/>
<dbReference type="PDBsum" id="3BXI"/>
<dbReference type="PDBsum" id="3ERI"/>
<dbReference type="PDBsum" id="3GC1"/>
<dbReference type="PDBsum" id="3GCJ"/>
<dbReference type="PDBsum" id="3GCK"/>
<dbReference type="PDBsum" id="3GCL"/>
<dbReference type="PDBsum" id="3I6N"/>
<dbReference type="PDBsum" id="3KRQ"/>
<dbReference type="PDBsum" id="3PY4"/>
<dbReference type="PDBsum" id="3R4X"/>
<dbReference type="PDBsum" id="3R5O"/>
<dbReference type="PDBsum" id="3TGY"/>
<dbReference type="PDBsum" id="3UBA"/>
<dbReference type="PDBsum" id="3V6Q"/>
<dbReference type="PDBsum" id="4GM7"/>
<dbReference type="PDBsum" id="4KSZ"/>
<dbReference type="PDBsum" id="4NJB"/>
<dbReference type="PDBsum" id="4PNX"/>
<dbReference type="PDBsum" id="5B72"/>
<dbReference type="PDBsum" id="5GH0"/>
<dbReference type="PDBsum" id="5GLS"/>
<dbReference type="PDBsum" id="5WV3"/>
<dbReference type="PDBsum" id="5ZGS"/>
<dbReference type="PDBsum" id="6A4Y"/>
<dbReference type="PDBsum" id="6KMK"/>
<dbReference type="PDBsum" id="6KY7"/>
<dbReference type="PDBsum" id="6L2J"/>
<dbReference type="PDBsum" id="6L5G"/>
<dbReference type="PDBsum" id="6L9T"/>
<dbReference type="PDBsum" id="6M7E"/>
<dbReference type="PDBsum" id="7C75"/>
<dbReference type="PDBsum" id="7D52"/>
<dbReference type="PDBsum" id="7DLQ"/>
<dbReference type="PDBsum" id="7DMR"/>
<dbReference type="PDBsum" id="7DN6"/>
<dbReference type="PDBsum" id="7DN7"/>
<dbReference type="PDBsum" id="7WYJ"/>
<dbReference type="PDBsum" id="8Y9X"/>
<dbReference type="PDBsum" id="9IT8"/>
<dbReference type="PDBsum" id="9KU6"/>
<dbReference type="PDBsum" id="9M0I"/>
<dbReference type="SMR" id="P80025"/>
<dbReference type="FunCoup" id="P80025">
    <property type="interactions" value="19"/>
</dbReference>
<dbReference type="STRING" id="9913.ENSBTAP00000054415"/>
<dbReference type="BindingDB" id="P80025"/>
<dbReference type="ChEMBL" id="CHEMBL2295561"/>
<dbReference type="DrugCentral" id="P80025"/>
<dbReference type="PeroxiBase" id="3331">
    <property type="entry name" value="BtLPO"/>
</dbReference>
<dbReference type="GlyCosmos" id="P80025">
    <property type="glycosylation" value="5 sites, No reported glycans"/>
</dbReference>
<dbReference type="GlyGen" id="P80025">
    <property type="glycosylation" value="5 sites"/>
</dbReference>
<dbReference type="iPTMnet" id="P80025"/>
<dbReference type="PaxDb" id="9913-ENSBTAP00000016986"/>
<dbReference type="PeptideAtlas" id="P80025"/>
<dbReference type="Ensembl" id="ENSBTAT00000116703.1">
    <property type="protein sequence ID" value="ENSBTAP00000092409.1"/>
    <property type="gene ID" value="ENSBTAG00000012780.5"/>
</dbReference>
<dbReference type="GeneID" id="280844"/>
<dbReference type="KEGG" id="bta:280844"/>
<dbReference type="CTD" id="4025"/>
<dbReference type="VEuPathDB" id="HostDB:ENSBTAG00000012780"/>
<dbReference type="VGNC" id="VGNC:30970">
    <property type="gene designation" value="LPO"/>
</dbReference>
<dbReference type="eggNOG" id="KOG2408">
    <property type="taxonomic scope" value="Eukaryota"/>
</dbReference>
<dbReference type="GeneTree" id="ENSGT00940000160488"/>
<dbReference type="InParanoid" id="P80025"/>
<dbReference type="OMA" id="QNKMMTR"/>
<dbReference type="OrthoDB" id="823504at2759"/>
<dbReference type="TreeFam" id="TF314316"/>
<dbReference type="BRENDA" id="1.11.1.7">
    <property type="organism ID" value="908"/>
</dbReference>
<dbReference type="Reactome" id="R-BTA-8941413">
    <property type="pathway name" value="Events associated with phagocytolytic activity of PMN cells"/>
</dbReference>
<dbReference type="SABIO-RK" id="P80025"/>
<dbReference type="EvolutionaryTrace" id="P80025"/>
<dbReference type="PRO" id="PR:P80025"/>
<dbReference type="Proteomes" id="UP000009136">
    <property type="component" value="Chromosome 19"/>
</dbReference>
<dbReference type="Bgee" id="ENSBTAG00000012780">
    <property type="expression patterns" value="Expressed in saliva-secreting gland and 40 other cell types or tissues"/>
</dbReference>
<dbReference type="GO" id="GO:0016323">
    <property type="term" value="C:basolateral plasma membrane"/>
    <property type="evidence" value="ECO:0007669"/>
    <property type="project" value="Ensembl"/>
</dbReference>
<dbReference type="GO" id="GO:0005737">
    <property type="term" value="C:cytoplasm"/>
    <property type="evidence" value="ECO:0007669"/>
    <property type="project" value="UniProtKB-SubCell"/>
</dbReference>
<dbReference type="GO" id="GO:0005615">
    <property type="term" value="C:extracellular space"/>
    <property type="evidence" value="ECO:0000314"/>
    <property type="project" value="UniProtKB"/>
</dbReference>
<dbReference type="GO" id="GO:0005509">
    <property type="term" value="F:calcium ion binding"/>
    <property type="evidence" value="ECO:0000314"/>
    <property type="project" value="UniProtKB"/>
</dbReference>
<dbReference type="GO" id="GO:0020037">
    <property type="term" value="F:heme binding"/>
    <property type="evidence" value="ECO:0007669"/>
    <property type="project" value="InterPro"/>
</dbReference>
<dbReference type="GO" id="GO:0140825">
    <property type="term" value="F:lactoperoxidase activity"/>
    <property type="evidence" value="ECO:0007669"/>
    <property type="project" value="UniProtKB-EC"/>
</dbReference>
<dbReference type="GO" id="GO:0004601">
    <property type="term" value="F:peroxidase activity"/>
    <property type="evidence" value="ECO:0000314"/>
    <property type="project" value="UniProtKB"/>
</dbReference>
<dbReference type="GO" id="GO:0036393">
    <property type="term" value="F:thiocyanate peroxidase activity"/>
    <property type="evidence" value="ECO:0000314"/>
    <property type="project" value="UniProtKB"/>
</dbReference>
<dbReference type="GO" id="GO:0019731">
    <property type="term" value="P:antibacterial humoral response"/>
    <property type="evidence" value="ECO:0000314"/>
    <property type="project" value="UniProtKB"/>
</dbReference>
<dbReference type="GO" id="GO:0042742">
    <property type="term" value="P:defense response to bacterium"/>
    <property type="evidence" value="ECO:0000318"/>
    <property type="project" value="GO_Central"/>
</dbReference>
<dbReference type="GO" id="GO:0001580">
    <property type="term" value="P:detection of chemical stimulus involved in sensory perception of bitter taste"/>
    <property type="evidence" value="ECO:0007669"/>
    <property type="project" value="Ensembl"/>
</dbReference>
<dbReference type="GO" id="GO:0042744">
    <property type="term" value="P:hydrogen peroxide catabolic process"/>
    <property type="evidence" value="ECO:0000314"/>
    <property type="project" value="UniProtKB"/>
</dbReference>
<dbReference type="GO" id="GO:0006979">
    <property type="term" value="P:response to oxidative stress"/>
    <property type="evidence" value="ECO:0007669"/>
    <property type="project" value="InterPro"/>
</dbReference>
<dbReference type="CDD" id="cd09824">
    <property type="entry name" value="myeloperoxidase_like"/>
    <property type="match status" value="1"/>
</dbReference>
<dbReference type="FunFam" id="1.10.640.10:FF:000001">
    <property type="entry name" value="Peroxidasin homolog"/>
    <property type="match status" value="1"/>
</dbReference>
<dbReference type="Gene3D" id="1.10.640.10">
    <property type="entry name" value="Haem peroxidase domain superfamily, animal type"/>
    <property type="match status" value="1"/>
</dbReference>
<dbReference type="InterPro" id="IPR019791">
    <property type="entry name" value="Haem_peroxidase_animal"/>
</dbReference>
<dbReference type="InterPro" id="IPR010255">
    <property type="entry name" value="Haem_peroxidase_sf"/>
</dbReference>
<dbReference type="InterPro" id="IPR037120">
    <property type="entry name" value="Haem_peroxidase_sf_animal"/>
</dbReference>
<dbReference type="PANTHER" id="PTHR11475:SF67">
    <property type="entry name" value="LACTOPEROXIDASE"/>
    <property type="match status" value="1"/>
</dbReference>
<dbReference type="PANTHER" id="PTHR11475">
    <property type="entry name" value="OXIDASE/PEROXIDASE"/>
    <property type="match status" value="1"/>
</dbReference>
<dbReference type="Pfam" id="PF03098">
    <property type="entry name" value="An_peroxidase"/>
    <property type="match status" value="1"/>
</dbReference>
<dbReference type="PRINTS" id="PR00457">
    <property type="entry name" value="ANPEROXIDASE"/>
</dbReference>
<dbReference type="SUPFAM" id="SSF48113">
    <property type="entry name" value="Heme-dependent peroxidases"/>
    <property type="match status" value="1"/>
</dbReference>
<dbReference type="PROSITE" id="PS50292">
    <property type="entry name" value="PEROXIDASE_3"/>
    <property type="match status" value="1"/>
</dbReference>
<feature type="signal peptide" evidence="5">
    <location>
        <begin position="1"/>
        <end position="22"/>
    </location>
</feature>
<feature type="propeptide" id="PRO_0000023647" evidence="11">
    <location>
        <begin position="23"/>
        <end position="100"/>
    </location>
</feature>
<feature type="chain" id="PRO_0000023648" description="Lactoperoxidase">
    <location>
        <begin position="101"/>
        <end position="712"/>
    </location>
</feature>
<feature type="active site" description="Proton acceptor" evidence="6">
    <location>
        <position position="226"/>
    </location>
</feature>
<feature type="binding site" description="covalent" evidence="9 10 12">
    <location>
        <position position="225"/>
    </location>
    <ligand>
        <name>heme b</name>
        <dbReference type="ChEBI" id="CHEBI:60344"/>
    </ligand>
</feature>
<feature type="binding site" evidence="6 9 10 12">
    <location>
        <position position="227"/>
    </location>
    <ligand>
        <name>Ca(2+)</name>
        <dbReference type="ChEBI" id="CHEBI:29108"/>
    </ligand>
</feature>
<feature type="binding site" evidence="6 9 10 12">
    <location>
        <position position="301"/>
    </location>
    <ligand>
        <name>Ca(2+)</name>
        <dbReference type="ChEBI" id="CHEBI:29108"/>
    </ligand>
</feature>
<feature type="binding site" evidence="6 9 10 12">
    <location>
        <position position="303"/>
    </location>
    <ligand>
        <name>Ca(2+)</name>
        <dbReference type="ChEBI" id="CHEBI:29108"/>
    </ligand>
</feature>
<feature type="binding site" evidence="6 9 10 12">
    <location>
        <position position="305"/>
    </location>
    <ligand>
        <name>Ca(2+)</name>
        <dbReference type="ChEBI" id="CHEBI:29108"/>
    </ligand>
</feature>
<feature type="binding site" evidence="6 9 10 12">
    <location>
        <position position="307"/>
    </location>
    <ligand>
        <name>Ca(2+)</name>
        <dbReference type="ChEBI" id="CHEBI:29108"/>
    </ligand>
</feature>
<feature type="binding site" description="covalent" evidence="9 10 12">
    <location>
        <position position="375"/>
    </location>
    <ligand>
        <name>heme b</name>
        <dbReference type="ChEBI" id="CHEBI:60344"/>
    </ligand>
</feature>
<feature type="binding site" description="axial binding residue" evidence="9 10 12">
    <location>
        <position position="468"/>
    </location>
    <ligand>
        <name>heme b</name>
        <dbReference type="ChEBI" id="CHEBI:60344"/>
    </ligand>
    <ligandPart>
        <name>Fe</name>
        <dbReference type="ChEBI" id="CHEBI:18248"/>
    </ligandPart>
</feature>
<feature type="site" description="Transition state stabilizer" evidence="6">
    <location>
        <position position="372"/>
    </location>
</feature>
<feature type="modified residue" description="Phosphoserine" evidence="9 10">
    <location>
        <position position="315"/>
    </location>
</feature>
<feature type="modified residue" description="3'-nitrotyrosine" evidence="2">
    <location>
        <position position="482"/>
    </location>
</feature>
<feature type="glycosylation site" description="N-linked (GlcNAc...) asparagine" evidence="5">
    <location>
        <position position="106"/>
    </location>
</feature>
<feature type="glycosylation site" description="N-linked (GlcNAc...) asparagine" evidence="9 10">
    <location>
        <position position="212"/>
    </location>
</feature>
<feature type="glycosylation site" description="N-linked (GlcNAc...) asparagine" evidence="9 10">
    <location>
        <position position="322"/>
    </location>
</feature>
<feature type="glycosylation site" description="N-linked (GlcNAc...) asparagine" evidence="9 10">
    <location>
        <position position="358"/>
    </location>
</feature>
<feature type="glycosylation site" description="N-linked (GlcNAc...) asparagine" evidence="9 10">
    <location>
        <position position="449"/>
    </location>
</feature>
<feature type="disulfide bond" evidence="12">
    <location>
        <begin position="123"/>
        <end position="284"/>
    </location>
</feature>
<feature type="disulfide bond" evidence="9 10 12">
    <location>
        <begin position="132"/>
        <end position="145"/>
    </location>
</feature>
<feature type="disulfide bond" evidence="9 10 12">
    <location>
        <begin position="246"/>
        <end position="256"/>
    </location>
</feature>
<feature type="disulfide bond" evidence="9 10 12">
    <location>
        <begin position="250"/>
        <end position="274"/>
    </location>
</feature>
<feature type="disulfide bond" evidence="9 10 12">
    <location>
        <begin position="354"/>
        <end position="365"/>
    </location>
</feature>
<feature type="disulfide bond" evidence="9 10 12">
    <location>
        <begin position="573"/>
        <end position="630"/>
    </location>
</feature>
<feature type="disulfide bond" evidence="9 10 12">
    <location>
        <begin position="671"/>
        <end position="696"/>
    </location>
</feature>
<feature type="mutagenesis site" description="Partially bound heme and decrease in activity. Loss of heme binding and activity; when associated with D-375." evidence="7 8">
    <original>D</original>
    <variation>E</variation>
    <location>
        <position position="225"/>
    </location>
</feature>
<feature type="mutagenesis site" description="Partially bound heme." evidence="7 8">
    <original>D</original>
    <variation>V</variation>
    <location>
        <position position="225"/>
    </location>
</feature>
<feature type="mutagenesis site" description="Partially bound heme. Loss of heme binding and activity; when associated with E-225." evidence="7 8">
    <original>E</original>
    <variation>D</variation>
    <location>
        <position position="375"/>
    </location>
</feature>
<feature type="mutagenesis site" description="Decrease in activity." evidence="7 8">
    <original>E</original>
    <variation>Q</variation>
    <location>
        <position position="375"/>
    </location>
</feature>
<feature type="sequence conflict" description="In Ref. 2; AA sequence." evidence="16" ref="2">
    <original>N</original>
    <variation>R</variation>
    <location>
        <position position="449"/>
    </location>
</feature>
<feature type="strand" evidence="27">
    <location>
        <begin position="125"/>
        <end position="127"/>
    </location>
</feature>
<feature type="strand" evidence="30">
    <location>
        <begin position="141"/>
        <end position="143"/>
    </location>
</feature>
<feature type="strand" evidence="32">
    <location>
        <begin position="146"/>
        <end position="150"/>
    </location>
</feature>
<feature type="turn" evidence="32">
    <location>
        <begin position="151"/>
        <end position="154"/>
    </location>
</feature>
<feature type="strand" evidence="33">
    <location>
        <begin position="156"/>
        <end position="159"/>
    </location>
</feature>
<feature type="strand" evidence="32">
    <location>
        <begin position="171"/>
        <end position="173"/>
    </location>
</feature>
<feature type="strand" evidence="28">
    <location>
        <begin position="178"/>
        <end position="181"/>
    </location>
</feature>
<feature type="strand" evidence="26">
    <location>
        <begin position="184"/>
        <end position="187"/>
    </location>
</feature>
<feature type="helix" evidence="32">
    <location>
        <begin position="192"/>
        <end position="199"/>
    </location>
</feature>
<feature type="strand" evidence="32">
    <location>
        <begin position="209"/>
        <end position="214"/>
    </location>
</feature>
<feature type="helix" evidence="32">
    <location>
        <begin position="215"/>
        <end position="228"/>
    </location>
</feature>
<feature type="strand" evidence="33">
    <location>
        <begin position="237"/>
        <end position="239"/>
    </location>
</feature>
<feature type="helix" evidence="32">
    <location>
        <begin position="241"/>
        <end position="249"/>
    </location>
</feature>
<feature type="strand" evidence="25">
    <location>
        <begin position="254"/>
        <end position="256"/>
    </location>
</feature>
<feature type="helix" evidence="32">
    <location>
        <begin position="266"/>
        <end position="270"/>
    </location>
</feature>
<feature type="strand" evidence="32">
    <location>
        <begin position="273"/>
        <end position="275"/>
    </location>
</feature>
<feature type="strand" evidence="32">
    <location>
        <begin position="282"/>
        <end position="284"/>
    </location>
</feature>
<feature type="strand" evidence="32">
    <location>
        <begin position="286"/>
        <end position="288"/>
    </location>
</feature>
<feature type="strand" evidence="32">
    <location>
        <begin position="291"/>
        <end position="293"/>
    </location>
</feature>
<feature type="strand" evidence="32">
    <location>
        <begin position="296"/>
        <end position="298"/>
    </location>
</feature>
<feature type="strand" evidence="32">
    <location>
        <begin position="302"/>
        <end position="305"/>
    </location>
</feature>
<feature type="helix" evidence="32">
    <location>
        <begin position="307"/>
        <end position="310"/>
    </location>
</feature>
<feature type="helix" evidence="32">
    <location>
        <begin position="314"/>
        <end position="319"/>
    </location>
</feature>
<feature type="strand" evidence="32">
    <location>
        <begin position="324"/>
        <end position="327"/>
    </location>
</feature>
<feature type="strand" evidence="29">
    <location>
        <begin position="338"/>
        <end position="341"/>
    </location>
</feature>
<feature type="helix" evidence="32">
    <location>
        <begin position="353"/>
        <end position="356"/>
    </location>
</feature>
<feature type="turn" evidence="32">
    <location>
        <begin position="359"/>
        <end position="361"/>
    </location>
</feature>
<feature type="turn" evidence="32">
    <location>
        <begin position="371"/>
        <end position="374"/>
    </location>
</feature>
<feature type="helix" evidence="32">
    <location>
        <begin position="377"/>
        <end position="400"/>
    </location>
</feature>
<feature type="helix" evidence="32">
    <location>
        <begin position="406"/>
        <end position="427"/>
    </location>
</feature>
<feature type="helix" evidence="32">
    <location>
        <begin position="429"/>
        <end position="434"/>
    </location>
</feature>
<feature type="helix" evidence="32">
    <location>
        <begin position="435"/>
        <end position="437"/>
    </location>
</feature>
<feature type="helix" evidence="32">
    <location>
        <begin position="438"/>
        <end position="441"/>
    </location>
</feature>
<feature type="strand" evidence="26">
    <location>
        <begin position="450"/>
        <end position="452"/>
    </location>
</feature>
<feature type="helix" evidence="32">
    <location>
        <begin position="460"/>
        <end position="463"/>
    </location>
</feature>
<feature type="helix" evidence="32">
    <location>
        <begin position="464"/>
        <end position="470"/>
    </location>
</feature>
<feature type="strand" evidence="32">
    <location>
        <begin position="473"/>
        <end position="476"/>
    </location>
</feature>
<feature type="strand" evidence="32">
    <location>
        <begin position="482"/>
        <end position="484"/>
    </location>
</feature>
<feature type="strand" evidence="31">
    <location>
        <begin position="486"/>
        <end position="488"/>
    </location>
</feature>
<feature type="strand" evidence="32">
    <location>
        <begin position="490"/>
        <end position="492"/>
    </location>
</feature>
<feature type="helix" evidence="32">
    <location>
        <begin position="493"/>
        <end position="496"/>
    </location>
</feature>
<feature type="helix" evidence="32">
    <location>
        <begin position="501"/>
        <end position="504"/>
    </location>
</feature>
<feature type="turn" evidence="32">
    <location>
        <begin position="505"/>
        <end position="507"/>
    </location>
</feature>
<feature type="helix" evidence="32">
    <location>
        <begin position="510"/>
        <end position="518"/>
    </location>
</feature>
<feature type="strand" evidence="32">
    <location>
        <begin position="519"/>
        <end position="522"/>
    </location>
</feature>
<feature type="strand" evidence="31">
    <location>
        <begin position="526"/>
        <end position="528"/>
    </location>
</feature>
<feature type="helix" evidence="32">
    <location>
        <begin position="532"/>
        <end position="535"/>
    </location>
</feature>
<feature type="strand" evidence="35">
    <location>
        <begin position="537"/>
        <end position="539"/>
    </location>
</feature>
<feature type="turn" evidence="31">
    <location>
        <begin position="541"/>
        <end position="543"/>
    </location>
</feature>
<feature type="strand" evidence="32">
    <location>
        <begin position="545"/>
        <end position="548"/>
    </location>
</feature>
<feature type="helix" evidence="32">
    <location>
        <begin position="550"/>
        <end position="560"/>
    </location>
</feature>
<feature type="helix" evidence="32">
    <location>
        <begin position="566"/>
        <end position="572"/>
    </location>
</feature>
<feature type="helix" evidence="32">
    <location>
        <begin position="581"/>
        <end position="588"/>
    </location>
</feature>
<feature type="helix" evidence="32">
    <location>
        <begin position="591"/>
        <end position="601"/>
    </location>
</feature>
<feature type="helix" evidence="32">
    <location>
        <begin position="604"/>
        <end position="606"/>
    </location>
</feature>
<feature type="helix" evidence="32">
    <location>
        <begin position="609"/>
        <end position="615"/>
    </location>
</feature>
<feature type="strand" evidence="32">
    <location>
        <begin position="622"/>
        <end position="624"/>
    </location>
</feature>
<feature type="helix" evidence="32">
    <location>
        <begin position="626"/>
        <end position="641"/>
    </location>
</feature>
<feature type="strand" evidence="26">
    <location>
        <begin position="647"/>
        <end position="649"/>
    </location>
</feature>
<feature type="turn" evidence="34">
    <location>
        <begin position="650"/>
        <end position="652"/>
    </location>
</feature>
<feature type="helix" evidence="32">
    <location>
        <begin position="655"/>
        <end position="661"/>
    </location>
</feature>
<feature type="helix" evidence="32">
    <location>
        <begin position="666"/>
        <end position="673"/>
    </location>
</feature>
<feature type="strand" evidence="32">
    <location>
        <begin position="678"/>
        <end position="682"/>
    </location>
</feature>
<feature type="turn" evidence="32">
    <location>
        <begin position="689"/>
        <end position="692"/>
    </location>
</feature>
<feature type="strand" evidence="32">
    <location>
        <begin position="693"/>
        <end position="695"/>
    </location>
</feature>
<feature type="helix" evidence="32">
    <location>
        <begin position="696"/>
        <end position="698"/>
    </location>
</feature>
<feature type="helix" evidence="32">
    <location>
        <begin position="705"/>
        <end position="707"/>
    </location>
</feature>
<comment type="function">
    <text evidence="1 3 4 13 14 17 18 19">Heme-containing oxidoreductase which catalyzes the conversion of thiocyanate (SCN(-)) into antimicrobial agent hypothiocyanous acid (OSCN(-)) in the presence of hydrogen peroxide (H2O2) (Probable) (PubMed:5338806). Also involved in the conversion of iodide (I(-)) into hypoiodite (IO(-)) in the presence of H2O2 (Probable) (PubMed:354515). Responsible for the inactivation of a wide range of micro-organisms and hence, important component of defense mechanism (PubMed:354515, PubMed:5338806). The lactoperoxidase-SCN(-)-H2O2 system shows antibacterial properties against some streptococci strains (PubMed:5338806). The lactoperoxidase-I(-)-H2O2 system shows antibacterial properties against E.coli (PubMed:354515). May protect the udder from infection and may promote growth in newborns (By similarity). May be implicated in airway host defense against infection (By similarity). May contribute to maintaining an appropriate H2O2 cellular level, therefore protecting cells from H2O2-caused injuries and inflammation (By similarity).</text>
</comment>
<comment type="catalytic activity">
    <reaction evidence="13 14 17 18 19">
        <text>2 a phenolic donor + H2O2 = 2 a phenolic radical donor + 2 H2O</text>
        <dbReference type="Rhea" id="RHEA:56136"/>
        <dbReference type="ChEBI" id="CHEBI:15377"/>
        <dbReference type="ChEBI" id="CHEBI:16240"/>
        <dbReference type="ChEBI" id="CHEBI:139520"/>
        <dbReference type="ChEBI" id="CHEBI:139521"/>
        <dbReference type="EC" id="1.11.1.7"/>
    </reaction>
    <physiologicalReaction direction="left-to-right" evidence="17 18 19 20 21">
        <dbReference type="Rhea" id="RHEA:56137"/>
    </physiologicalReaction>
</comment>
<comment type="catalytic activity">
    <reaction evidence="14 17 18">
        <text>thiocyanate + H2O2 + H(+) = hypothiocyanous acid + H2O</text>
        <dbReference type="Rhea" id="RHEA:69416"/>
        <dbReference type="ChEBI" id="CHEBI:15377"/>
        <dbReference type="ChEBI" id="CHEBI:15378"/>
        <dbReference type="ChEBI" id="CHEBI:16240"/>
        <dbReference type="ChEBI" id="CHEBI:18022"/>
        <dbReference type="ChEBI" id="CHEBI:133907"/>
    </reaction>
    <physiologicalReaction direction="left-to-right" evidence="17 18 21">
        <dbReference type="Rhea" id="RHEA:69417"/>
    </physiologicalReaction>
</comment>
<comment type="catalytic activity">
    <reaction evidence="13 19">
        <text>iodide + H2O2 = hypoiodite + H2O</text>
        <dbReference type="Rhea" id="RHEA:69420"/>
        <dbReference type="ChEBI" id="CHEBI:15377"/>
        <dbReference type="ChEBI" id="CHEBI:16240"/>
        <dbReference type="ChEBI" id="CHEBI:16382"/>
        <dbReference type="ChEBI" id="CHEBI:29232"/>
    </reaction>
    <physiologicalReaction direction="left-to-right" evidence="19 20">
        <dbReference type="Rhea" id="RHEA:69421"/>
    </physiologicalReaction>
</comment>
<comment type="cofactor">
    <cofactor evidence="9 10 12">
        <name>Ca(2+)</name>
        <dbReference type="ChEBI" id="CHEBI:29108"/>
    </cofactor>
    <text evidence="9 10 12">Binds 1 Ca(2+) ion per heterodimer.</text>
</comment>
<comment type="cofactor">
    <cofactor evidence="9 10 12">
        <name>heme b</name>
        <dbReference type="ChEBI" id="CHEBI:60344"/>
    </cofactor>
    <text evidence="9 10 12">Binds 1 heme b (iron(II)-protoporphyrin IX) group covalently per heterodimer.</text>
</comment>
<comment type="subcellular location">
    <subcellularLocation>
        <location evidence="11">Secreted</location>
    </subcellularLocation>
    <subcellularLocation>
        <location evidence="4">Cytoplasm</location>
    </subcellularLocation>
</comment>
<comment type="tissue specificity">
    <text evidence="11">Mammary gland; milk.</text>
</comment>
<comment type="miscellaneous">
    <text evidence="9 10 12">Thiocyanate (SCN(-)) and hypothiocyanite (OSCN(-)) are bound in the distal heme cavity (PubMed:19167310, PubMed:19339248). The iodide ion (I(-)) occupies a position which is stabilized by the interactions with heme moiety, His-226, Arg-372 and Glu-375 (PubMed:33882424). Hydrogen peroxide is held between the heme iron and His-226 (PubMed:33882424).</text>
</comment>
<comment type="similarity">
    <text evidence="6">Belongs to the peroxidase family. XPO subfamily.</text>
</comment>
<sequence length="712" mass="80642">MWVCLQLPVFLASVTLFEVAASDTIAQAASTTTISDAVSKVKIQVNKAFLDSRTRLKTTLSSEAPTTQQLSEYFKHAKGRTRTAIRNGQVWEESLKRLRRDTTLTNVTDPSLDLTALSWEVGCGAPVPLVKCDENSPYRTITGDCNNRRSPALGAANRALARWLPAEYEDGLALPFGWTQRKTRNGFRVPLAREVSNKIVGYLDEEGVLDQNRSLLFMQWGQIVDHDLDFAPETELGSNEHSKTQCEEYCIQGDNCFPIMFPKNDPKLKTQGKCMPFFRAGFVCPTPPYQSLAREQINAVTSFLDASLVYGSEPSLASRLRNLSSPLGLMAVNQEAWDHGLAYLPFNNKKPSPCEFINTTARVPCFLAGDFRASEQILLATAHTLLLREHNRLARELKKLNPHWNGEKLYQEARKILGAFIQIITFRDYLPIVLGSEMQKWIPPYQGYNNSVDPRISNVFTFAFRFGHMEVPSTVSRLDENYQPWGPEAELPLHTLFFNTWRIIKDGGIDPLVRGLLAKKSKLMNQDKMVTSELRNKLFQPTHKIHGFDLAAINLQRCRDHGMPGYNSWRGFCGLSQPKTLKGLQTVLKNKILAKKLMDLYKTPDNIDIWIGGNAEPMVERGRVGPLLACLLGRQFQQIRDGDRFWWENPGVFTEKQRDSLQKVSFSRLICDNTHITKVPLHAFQANNYPHDFVDCSTVDKLDLSPWASREN</sequence>
<keyword id="KW-0002">3D-structure</keyword>
<keyword id="KW-0044">Antibiotic</keyword>
<keyword id="KW-0929">Antimicrobial</keyword>
<keyword id="KW-0106">Calcium</keyword>
<keyword id="KW-0165">Cleavage on pair of basic residues</keyword>
<keyword id="KW-0963">Cytoplasm</keyword>
<keyword id="KW-0903">Direct protein sequencing</keyword>
<keyword id="KW-1015">Disulfide bond</keyword>
<keyword id="KW-0325">Glycoprotein</keyword>
<keyword id="KW-0349">Heme</keyword>
<keyword id="KW-0376">Hydrogen peroxide</keyword>
<keyword id="KW-0408">Iron</keyword>
<keyword id="KW-0479">Metal-binding</keyword>
<keyword id="KW-0944">Nitration</keyword>
<keyword id="KW-0560">Oxidoreductase</keyword>
<keyword id="KW-0575">Peroxidase</keyword>
<keyword id="KW-0597">Phosphoprotein</keyword>
<keyword id="KW-1185">Reference proteome</keyword>
<keyword id="KW-0964">Secreted</keyword>
<keyword id="KW-0732">Signal</keyword>
<gene>
    <name type="primary">LPO</name>
</gene>
<proteinExistence type="evidence at protein level"/>
<name>PERL_BOVIN</name>
<protein>
    <recommendedName>
        <fullName evidence="15">Lactoperoxidase</fullName>
        <shortName evidence="15">LPO</shortName>
        <ecNumber evidence="13 14 17 18 19">1.11.1.7</ecNumber>
    </recommendedName>
</protein>
<organism>
    <name type="scientific">Bos taurus</name>
    <name type="common">Bovine</name>
    <dbReference type="NCBI Taxonomy" id="9913"/>
    <lineage>
        <taxon>Eukaryota</taxon>
        <taxon>Metazoa</taxon>
        <taxon>Chordata</taxon>
        <taxon>Craniata</taxon>
        <taxon>Vertebrata</taxon>
        <taxon>Euteleostomi</taxon>
        <taxon>Mammalia</taxon>
        <taxon>Eutheria</taxon>
        <taxon>Laurasiatheria</taxon>
        <taxon>Artiodactyla</taxon>
        <taxon>Ruminantia</taxon>
        <taxon>Pecora</taxon>
        <taxon>Bovidae</taxon>
        <taxon>Bovinae</taxon>
        <taxon>Bos</taxon>
    </lineage>
</organism>
<accession>P80025</accession>
<evidence type="ECO:0000250" key="1">
    <source>
        <dbReference type="UniProtKB" id="A0A452E9Y6"/>
    </source>
</evidence>
<evidence type="ECO:0000250" key="2">
    <source>
        <dbReference type="UniProtKB" id="P11678"/>
    </source>
</evidence>
<evidence type="ECO:0000250" key="3">
    <source>
        <dbReference type="UniProtKB" id="P22079"/>
    </source>
</evidence>
<evidence type="ECO:0000250" key="4">
    <source>
        <dbReference type="UniProtKB" id="Q5SW46"/>
    </source>
</evidence>
<evidence type="ECO:0000255" key="5"/>
<evidence type="ECO:0000255" key="6">
    <source>
        <dbReference type="PROSITE-ProRule" id="PRU00298"/>
    </source>
</evidence>
<evidence type="ECO:0000269" key="7">
    <source>
    </source>
</evidence>
<evidence type="ECO:0000269" key="8">
    <source>
    </source>
</evidence>
<evidence type="ECO:0000269" key="9">
    <source>
    </source>
</evidence>
<evidence type="ECO:0000269" key="10">
    <source>
    </source>
</evidence>
<evidence type="ECO:0000269" key="11">
    <source>
    </source>
</evidence>
<evidence type="ECO:0000269" key="12">
    <source>
    </source>
</evidence>
<evidence type="ECO:0000269" key="13">
    <source>
    </source>
</evidence>
<evidence type="ECO:0000269" key="14">
    <source>
    </source>
</evidence>
<evidence type="ECO:0000303" key="15">
    <source>
    </source>
</evidence>
<evidence type="ECO:0000305" key="16"/>
<evidence type="ECO:0000305" key="17">
    <source>
    </source>
</evidence>
<evidence type="ECO:0000305" key="18">
    <source>
    </source>
</evidence>
<evidence type="ECO:0000305" key="19">
    <source>
    </source>
</evidence>
<evidence type="ECO:0000305" key="20">
    <source>
    </source>
</evidence>
<evidence type="ECO:0000305" key="21">
    <source>
    </source>
</evidence>
<evidence type="ECO:0007744" key="22">
    <source>
        <dbReference type="PDB" id="7DLQ"/>
    </source>
</evidence>
<evidence type="ECO:0007744" key="23">
    <source>
        <dbReference type="PDB" id="7DN6"/>
    </source>
</evidence>
<evidence type="ECO:0007744" key="24">
    <source>
        <dbReference type="PDB" id="7DN7"/>
    </source>
</evidence>
<evidence type="ECO:0007829" key="25">
    <source>
        <dbReference type="PDB" id="2PT3"/>
    </source>
</evidence>
<evidence type="ECO:0007829" key="26">
    <source>
        <dbReference type="PDB" id="3GC1"/>
    </source>
</evidence>
<evidence type="ECO:0007829" key="27">
    <source>
        <dbReference type="PDB" id="3R4X"/>
    </source>
</evidence>
<evidence type="ECO:0007829" key="28">
    <source>
        <dbReference type="PDB" id="3TGY"/>
    </source>
</evidence>
<evidence type="ECO:0007829" key="29">
    <source>
        <dbReference type="PDB" id="4PNX"/>
    </source>
</evidence>
<evidence type="ECO:0007829" key="30">
    <source>
        <dbReference type="PDB" id="5B72"/>
    </source>
</evidence>
<evidence type="ECO:0007829" key="31">
    <source>
        <dbReference type="PDB" id="7DLQ"/>
    </source>
</evidence>
<evidence type="ECO:0007829" key="32">
    <source>
        <dbReference type="PDB" id="7DN6"/>
    </source>
</evidence>
<evidence type="ECO:0007829" key="33">
    <source>
        <dbReference type="PDB" id="7WYJ"/>
    </source>
</evidence>
<evidence type="ECO:0007829" key="34">
    <source>
        <dbReference type="PDB" id="8Y9X"/>
    </source>
</evidence>
<evidence type="ECO:0007829" key="35">
    <source>
        <dbReference type="PDB" id="9IT8"/>
    </source>
</evidence>
<reference key="1">
    <citation type="journal article" date="1990" name="DNA Cell Biol.">
        <title>Molecular cloning of cDNAs encoding bovine and human lactoperoxidase.</title>
        <authorList>
            <person name="Dull T.J."/>
            <person name="Uyeda C."/>
            <person name="Strosberg A.D."/>
            <person name="Nedwin G."/>
            <person name="Seilhamer J.J."/>
        </authorList>
    </citation>
    <scope>NUCLEOTIDE SEQUENCE [MRNA]</scope>
    <scope>PARTIAL PROTEIN SEQUENCE</scope>
</reference>
<reference key="2">
    <citation type="journal article" date="1991" name="Eur. J. Biochem.">
        <title>Primary structure of bovine lactoperoxidase, a fourth member of a mammalian heme peroxidase family.</title>
        <authorList>
            <person name="Cals M.-M."/>
            <person name="Mailliart P."/>
            <person name="Brignon G."/>
            <person name="Anglade P."/>
            <person name="Ribadeau-Dumas B."/>
        </authorList>
    </citation>
    <scope>PROTEIN SEQUENCE OF 101-712</scope>
    <scope>SUBCELLULAR LOCATION</scope>
    <scope>TISSUE SPECIFICITY</scope>
    <source>
        <tissue>Milk</tissue>
    </source>
</reference>
<reference key="3">
    <citation type="journal article" date="2000" name="Biochem. Biophys. Res. Commun.">
        <title>Bovine lactoperoxidase and its recombinant: comparison of structure and some biochemical properties.</title>
        <authorList>
            <person name="Watanabe S."/>
            <person name="Murata S."/>
            <person name="Kumura H."/>
            <person name="Nakamura S."/>
            <person name="Bollen A."/>
            <person name="Moguilevsky N."/>
            <person name="Shimazaki K."/>
        </authorList>
    </citation>
    <scope>CIRCULAR DICHROISM ANALYSIS</scope>
    <scope>PARTIAL PROTEIN SEQUENCE</scope>
</reference>
<reference key="4">
    <citation type="journal article" date="1966" name="Biochem. J.">
        <title>The inhibition of streptococci by lactoperoxidase, thiocyanate and hydrogen peroxide. The oxidation of thiocyanate and the nature of the inhibitory compound.</title>
        <authorList>
            <person name="Oram J.D."/>
            <person name="Reiter B."/>
        </authorList>
    </citation>
    <scope>FUNCTION</scope>
    <scope>CATALYTIC ACTIVITY</scope>
</reference>
<reference key="5">
    <citation type="journal article" date="1978" name="Antimicrob. Agents Chemother.">
        <title>Oxidation of Escherichia coli sulfhydryl components by the peroxidase-hydrogen peroxide-iodide antimicrobial system.</title>
        <authorList>
            <person name="Thomas E.L."/>
            <person name="Aune T.M."/>
        </authorList>
    </citation>
    <scope>FUNCTION</scope>
    <scope>CATALYTIC ACTIVITY</scope>
</reference>
<reference key="6">
    <citation type="journal article" date="1997" name="J. Biol. Chem.">
        <title>Autocatalytic processing of heme by lactoperoxidase produces the native protein-bound prosthetic group.</title>
        <authorList>
            <person name="DePillis G.D."/>
            <person name="Ozaki S."/>
            <person name="Kuo J.M."/>
            <person name="Maltby D.A."/>
            <person name="Ortiz de Montellano P.R."/>
        </authorList>
    </citation>
    <scope>COVALENT HEME ATTACHMENT</scope>
</reference>
<reference key="7">
    <citation type="journal article" date="1998" name="J. Biol. Chem.">
        <title>The heme prosthetic group of lactoperoxidase. Structural characteristics of heme l and heme l-peptides.</title>
        <authorList>
            <person name="Rae T.D."/>
            <person name="Goff H.M."/>
        </authorList>
    </citation>
    <scope>COVALENT HEME ATTACHMENT</scope>
    <source>
        <tissue>Milk</tissue>
    </source>
</reference>
<reference key="8">
    <citation type="journal article" date="2001" name="Bioorg. Med. Chem. Lett.">
        <title>Glu375Gln and Asp225Val mutants: about the nature of the covalent linkages between heme group and apo-protein in bovine lactoperoxidase.</title>
        <authorList>
            <person name="Suriano G."/>
            <person name="Watanabe S."/>
            <person name="Ghibaudi E.M."/>
            <person name="Bollen A."/>
            <person name="Ferrari R.P."/>
            <person name="Moguilevsky N."/>
        </authorList>
    </citation>
    <scope>COVALENT HEME ATTACHMENT</scope>
    <scope>MUTAGENESIS OF ASP-225 AND GLU-375</scope>
</reference>
<reference key="9">
    <citation type="journal article" date="2002" name="J. Biol. Chem.">
        <title>Asp-225 and Glu-375 in autocatalytic attachment of the prosthetic heme group of lactoperoxidase.</title>
        <authorList>
            <person name="Colas C."/>
            <person name="Kuo J.M."/>
            <person name="Ortiz de Montellano P.R."/>
        </authorList>
    </citation>
    <scope>COVALENT HEME ATTACHMENT</scope>
    <scope>MUTAGENESIS OF ASP-225 AND GLU-375</scope>
</reference>
<reference key="10">
    <citation type="journal article" date="2009" name="Biophys. J.">
        <title>Inhibition of lactoperoxidase by its own catalytic product: crystal structure of the hypothiocyanate-inhibited bovine lactoperoxidase at 2.3-A resolution.</title>
        <authorList>
            <person name="Singh A.K."/>
            <person name="Singh N."/>
            <person name="Sharma S."/>
            <person name="Shin K."/>
            <person name="Takase M."/>
            <person name="Kaur P."/>
            <person name="Srinivasan A."/>
            <person name="Singh T.P."/>
        </authorList>
    </citation>
    <scope>X-RAY CRYSTALLOGRAPHY (2.3 ANGSTROMS) OF 130-712 IN COMPLEX WITH HYPOTHIOCYANATE</scope>
    <scope>GLYCOSYLATION AT ASN-212; ASN-322; ASN-358 AND ASN-449</scope>
    <scope>PHOSPHORYLATION AT SER-315</scope>
    <scope>COFACTOR</scope>
    <scope>CALCIUM-BINDING SITES</scope>
    <scope>DISULFIDE BONDS</scope>
    <scope>FUNCTION</scope>
    <scope>CATALYTIC ACTIVITY</scope>
</reference>
<reference key="11">
    <citation type="journal article" date="2009" name="J. Biol. Chem.">
        <title>Structural evidence of substrate specificity in mammalian peroxidases: structure of the thiocyanate complex with lactoperoxidase and its interactions at 2.4 A resolution.</title>
        <authorList>
            <person name="Sheikh I.A."/>
            <person name="Singh A.K."/>
            <person name="Singh N."/>
            <person name="Sinha M."/>
            <person name="Singh S.B."/>
            <person name="Bhushan A."/>
            <person name="Kaur P."/>
            <person name="Srinivasan A."/>
            <person name="Sharma S."/>
            <person name="Singh T.P."/>
        </authorList>
    </citation>
    <scope>X-RAY CRYSTALLOGRAPHY (2.5 ANGSTROMS) OF 118-712 IN COMPLEX WITH THIOCYANATE; CALCIUM AND HEME</scope>
    <scope>COFACTOR</scope>
    <scope>CALCIUM-BINDING SITES</scope>
    <scope>PHOSPHORYLATION AT SER-315</scope>
    <scope>GLYCOSYLATION AT ASN-212; ASN-322; ASN-358 AND ASN-449</scope>
    <scope>DISULFIDE BONDS</scope>
    <scope>FUNCTION</scope>
    <scope>CATALYTIC ACTIVITY</scope>
</reference>
<reference evidence="22 23 24" key="12">
    <citation type="journal article" date="2021" name="J. Inorg. Biochem.">
        <title>Structure of a ternary complex of lactoperoxidase with iodide and hydrogen peroxide at 1.77A resolution.</title>
        <authorList>
            <person name="Singh P.K."/>
            <person name="Sharma P."/>
            <person name="Bhushan A."/>
            <person name="Kaur P."/>
            <person name="Sharma S."/>
            <person name="Singh T.P."/>
        </authorList>
    </citation>
    <scope>X-RAY CRYSTALLOGRAPHY (1.70 ANGSTROMS) OF 118-712 IN COMPLEX WITH HYDROGEN PEROXIDE; IODIDE; CALCIUM AND HEME</scope>
    <scope>COFACTOR</scope>
    <scope>DISULFIDE BONDS</scope>
    <scope>FUNCTION</scope>
    <scope>CATALYTIC ACTIVITY</scope>
</reference>